<reference key="1">
    <citation type="journal article" date="2009" name="Proc. Natl. Acad. Sci. U.S.A.">
        <title>The mosaic genome structure of the Wolbachia wRi strain infecting Drosophila simulans.</title>
        <authorList>
            <person name="Klasson L."/>
            <person name="Westberg J."/>
            <person name="Sapountzis P."/>
            <person name="Naeslund K."/>
            <person name="Lutnaes Y."/>
            <person name="Darby A.C."/>
            <person name="Veneti Z."/>
            <person name="Chen L."/>
            <person name="Braig H.R."/>
            <person name="Garrett R."/>
            <person name="Bourtzis K."/>
            <person name="Andersson S.G."/>
        </authorList>
    </citation>
    <scope>NUCLEOTIDE SEQUENCE [LARGE SCALE GENOMIC DNA]</scope>
    <source>
        <strain>wRi</strain>
    </source>
</reference>
<evidence type="ECO:0000255" key="1">
    <source>
        <dbReference type="HAMAP-Rule" id="MF_00203"/>
    </source>
</evidence>
<feature type="chain" id="PRO_1000200610" description="UvrABC system protein C">
    <location>
        <begin position="1"/>
        <end position="605"/>
    </location>
</feature>
<feature type="domain" description="GIY-YIG" evidence="1">
    <location>
        <begin position="14"/>
        <end position="92"/>
    </location>
</feature>
<feature type="domain" description="UVR" evidence="1">
    <location>
        <begin position="202"/>
        <end position="237"/>
    </location>
</feature>
<keyword id="KW-0963">Cytoplasm</keyword>
<keyword id="KW-0227">DNA damage</keyword>
<keyword id="KW-0228">DNA excision</keyword>
<keyword id="KW-0234">DNA repair</keyword>
<keyword id="KW-0267">Excision nuclease</keyword>
<keyword id="KW-0742">SOS response</keyword>
<sequence>MLRQYKEQIKSSPQSCGVYKMVGDKNKVLYVGKAKNLKSRLSDYLQFENLSERIRVMLSQVIKVEIFITENEIEALLLEAQLIKSLKPLYNIVLKDGKFYPYITISKHDYPRIAKYRGKFKKNEFHYYGPFTSAAAVKQTILSLQKAFLLRVCSDQYFSSTKRPCIEYQIKRCSAPCVDKITKDDYCQSVKQARNTLLGRNKEVKEQLLFTMRKCSSEENYELAAIYRDRVKFLEQIQIQHTDFSFEKDADFFSIVREEDLACISVLSFRNKDNYGSTPYFAENCGDHSNDEILSTFLVNFYNSANIPPIQIYVPDSIVDKEIIEQALYKVAQKPVKVLHAKNKKERDLLKFVYDNSQHSLEQKLIDYRNNLEKLEELSKIFLLPNIPKRIEVYDNSHIFGNQQIGVMVVAGQEGFLKSEYRKFTIKEKFSGDDYKMMREVLTRRFSGNIKGIIPDFLLIDGGPGHVSIVQNVLEVLNINVPFACMAKGPDRNAGNERFYMLGREEFSLANDSKVMLYLQSLRNEAHRFAITSHRKKRDKQFIVSQLSKIPGIGNKRKKALMSYFGSVKNISKASLAEIQNIPGISKGLAEVILKHVNYKRGVLE</sequence>
<gene>
    <name evidence="1" type="primary">uvrC</name>
    <name type="ordered locus">WRi_000980</name>
</gene>
<proteinExistence type="inferred from homology"/>
<accession>C0R5B1</accession>
<organism>
    <name type="scientific">Wolbachia sp. subsp. Drosophila simulans (strain wRi)</name>
    <dbReference type="NCBI Taxonomy" id="66084"/>
    <lineage>
        <taxon>Bacteria</taxon>
        <taxon>Pseudomonadati</taxon>
        <taxon>Pseudomonadota</taxon>
        <taxon>Alphaproteobacteria</taxon>
        <taxon>Rickettsiales</taxon>
        <taxon>Anaplasmataceae</taxon>
        <taxon>Wolbachieae</taxon>
        <taxon>Wolbachia</taxon>
    </lineage>
</organism>
<name>UVRC_WOLWR</name>
<protein>
    <recommendedName>
        <fullName evidence="1">UvrABC system protein C</fullName>
        <shortName evidence="1">Protein UvrC</shortName>
    </recommendedName>
    <alternativeName>
        <fullName evidence="1">Excinuclease ABC subunit C</fullName>
    </alternativeName>
</protein>
<comment type="function">
    <text evidence="1">The UvrABC repair system catalyzes the recognition and processing of DNA lesions. UvrC both incises the 5' and 3' sides of the lesion. The N-terminal half is responsible for the 3' incision and the C-terminal half is responsible for the 5' incision.</text>
</comment>
<comment type="subunit">
    <text evidence="1">Interacts with UvrB in an incision complex.</text>
</comment>
<comment type="subcellular location">
    <subcellularLocation>
        <location evidence="1">Cytoplasm</location>
    </subcellularLocation>
</comment>
<comment type="similarity">
    <text evidence="1">Belongs to the UvrC family.</text>
</comment>
<dbReference type="EMBL" id="CP001391">
    <property type="protein sequence ID" value="ACN94953.1"/>
    <property type="molecule type" value="Genomic_DNA"/>
</dbReference>
<dbReference type="RefSeq" id="WP_006280147.1">
    <property type="nucleotide sequence ID" value="NZ_MKIF01000046.1"/>
</dbReference>
<dbReference type="SMR" id="C0R5B1"/>
<dbReference type="STRING" id="66084.WRi_000980"/>
<dbReference type="KEGG" id="wri:WRi_000980"/>
<dbReference type="HOGENOM" id="CLU_014841_3_0_5"/>
<dbReference type="Proteomes" id="UP000001293">
    <property type="component" value="Chromosome"/>
</dbReference>
<dbReference type="GO" id="GO:0005737">
    <property type="term" value="C:cytoplasm"/>
    <property type="evidence" value="ECO:0007669"/>
    <property type="project" value="UniProtKB-SubCell"/>
</dbReference>
<dbReference type="GO" id="GO:0009380">
    <property type="term" value="C:excinuclease repair complex"/>
    <property type="evidence" value="ECO:0007669"/>
    <property type="project" value="InterPro"/>
</dbReference>
<dbReference type="GO" id="GO:0003677">
    <property type="term" value="F:DNA binding"/>
    <property type="evidence" value="ECO:0007669"/>
    <property type="project" value="UniProtKB-UniRule"/>
</dbReference>
<dbReference type="GO" id="GO:0009381">
    <property type="term" value="F:excinuclease ABC activity"/>
    <property type="evidence" value="ECO:0007669"/>
    <property type="project" value="UniProtKB-UniRule"/>
</dbReference>
<dbReference type="GO" id="GO:0006289">
    <property type="term" value="P:nucleotide-excision repair"/>
    <property type="evidence" value="ECO:0007669"/>
    <property type="project" value="UniProtKB-UniRule"/>
</dbReference>
<dbReference type="GO" id="GO:0009432">
    <property type="term" value="P:SOS response"/>
    <property type="evidence" value="ECO:0007669"/>
    <property type="project" value="UniProtKB-UniRule"/>
</dbReference>
<dbReference type="CDD" id="cd10434">
    <property type="entry name" value="GIY-YIG_UvrC_Cho"/>
    <property type="match status" value="1"/>
</dbReference>
<dbReference type="FunFam" id="3.40.1440.10:FF:000001">
    <property type="entry name" value="UvrABC system protein C"/>
    <property type="match status" value="1"/>
</dbReference>
<dbReference type="Gene3D" id="1.10.150.20">
    <property type="entry name" value="5' to 3' exonuclease, C-terminal subdomain"/>
    <property type="match status" value="1"/>
</dbReference>
<dbReference type="Gene3D" id="3.40.1440.10">
    <property type="entry name" value="GIY-YIG endonuclease"/>
    <property type="match status" value="1"/>
</dbReference>
<dbReference type="Gene3D" id="3.30.420.340">
    <property type="entry name" value="UvrC, RNAse H endonuclease domain"/>
    <property type="match status" value="1"/>
</dbReference>
<dbReference type="HAMAP" id="MF_00203">
    <property type="entry name" value="UvrC"/>
    <property type="match status" value="1"/>
</dbReference>
<dbReference type="InterPro" id="IPR000305">
    <property type="entry name" value="GIY-YIG_endonuc"/>
</dbReference>
<dbReference type="InterPro" id="IPR035901">
    <property type="entry name" value="GIY-YIG_endonuc_sf"/>
</dbReference>
<dbReference type="InterPro" id="IPR047296">
    <property type="entry name" value="GIY-YIG_UvrC_Cho"/>
</dbReference>
<dbReference type="InterPro" id="IPR003583">
    <property type="entry name" value="Hlx-hairpin-Hlx_DNA-bd_motif"/>
</dbReference>
<dbReference type="InterPro" id="IPR010994">
    <property type="entry name" value="RuvA_2-like"/>
</dbReference>
<dbReference type="InterPro" id="IPR001943">
    <property type="entry name" value="UVR_dom"/>
</dbReference>
<dbReference type="InterPro" id="IPR036876">
    <property type="entry name" value="UVR_dom_sf"/>
</dbReference>
<dbReference type="InterPro" id="IPR050066">
    <property type="entry name" value="UvrABC_protein_C"/>
</dbReference>
<dbReference type="InterPro" id="IPR004791">
    <property type="entry name" value="UvrC"/>
</dbReference>
<dbReference type="InterPro" id="IPR001162">
    <property type="entry name" value="UvrC_RNase_H_dom"/>
</dbReference>
<dbReference type="InterPro" id="IPR038476">
    <property type="entry name" value="UvrC_RNase_H_dom_sf"/>
</dbReference>
<dbReference type="NCBIfam" id="TIGR00194">
    <property type="entry name" value="uvrC"/>
    <property type="match status" value="1"/>
</dbReference>
<dbReference type="PANTHER" id="PTHR30562:SF1">
    <property type="entry name" value="UVRABC SYSTEM PROTEIN C"/>
    <property type="match status" value="1"/>
</dbReference>
<dbReference type="PANTHER" id="PTHR30562">
    <property type="entry name" value="UVRC/OXIDOREDUCTASE"/>
    <property type="match status" value="1"/>
</dbReference>
<dbReference type="Pfam" id="PF01541">
    <property type="entry name" value="GIY-YIG"/>
    <property type="match status" value="1"/>
</dbReference>
<dbReference type="Pfam" id="PF14520">
    <property type="entry name" value="HHH_5"/>
    <property type="match status" value="1"/>
</dbReference>
<dbReference type="Pfam" id="PF02151">
    <property type="entry name" value="UVR"/>
    <property type="match status" value="1"/>
</dbReference>
<dbReference type="Pfam" id="PF22920">
    <property type="entry name" value="UvrC_RNaseH"/>
    <property type="match status" value="1"/>
</dbReference>
<dbReference type="Pfam" id="PF08459">
    <property type="entry name" value="UvrC_RNaseH_dom"/>
    <property type="match status" value="1"/>
</dbReference>
<dbReference type="SMART" id="SM00465">
    <property type="entry name" value="GIYc"/>
    <property type="match status" value="1"/>
</dbReference>
<dbReference type="SMART" id="SM00278">
    <property type="entry name" value="HhH1"/>
    <property type="match status" value="2"/>
</dbReference>
<dbReference type="SUPFAM" id="SSF46600">
    <property type="entry name" value="C-terminal UvrC-binding domain of UvrB"/>
    <property type="match status" value="1"/>
</dbReference>
<dbReference type="SUPFAM" id="SSF82771">
    <property type="entry name" value="GIY-YIG endonuclease"/>
    <property type="match status" value="1"/>
</dbReference>
<dbReference type="SUPFAM" id="SSF47781">
    <property type="entry name" value="RuvA domain 2-like"/>
    <property type="match status" value="1"/>
</dbReference>
<dbReference type="PROSITE" id="PS50164">
    <property type="entry name" value="GIY_YIG"/>
    <property type="match status" value="1"/>
</dbReference>
<dbReference type="PROSITE" id="PS50165">
    <property type="entry name" value="UVRC"/>
    <property type="match status" value="1"/>
</dbReference>